<proteinExistence type="evidence at transcript level"/>
<dbReference type="EMBL" id="AF084478">
    <property type="protein sequence ID" value="AAC97932.3"/>
    <property type="molecule type" value="mRNA"/>
</dbReference>
<dbReference type="RefSeq" id="NP_001104921.1">
    <property type="nucleotide sequence ID" value="NM_001111451.2"/>
</dbReference>
<dbReference type="SMR" id="Q9ZT00"/>
<dbReference type="FunCoup" id="Q9ZT00">
    <property type="interactions" value="1630"/>
</dbReference>
<dbReference type="STRING" id="4577.Q9ZT00"/>
<dbReference type="PaxDb" id="4577-GRMZM2G162200_P01"/>
<dbReference type="EnsemblPlants" id="Zm00001eb164390_T001">
    <property type="protein sequence ID" value="Zm00001eb164390_P001"/>
    <property type="gene ID" value="Zm00001eb164390"/>
</dbReference>
<dbReference type="EnsemblPlants" id="Zm00001eb164390_T002">
    <property type="protein sequence ID" value="Zm00001eb164390_P002"/>
    <property type="gene ID" value="Zm00001eb164390"/>
</dbReference>
<dbReference type="GeneID" id="541712"/>
<dbReference type="Gramene" id="Zm00001eb164390_T001">
    <property type="protein sequence ID" value="Zm00001eb164390_P001"/>
    <property type="gene ID" value="Zm00001eb164390"/>
</dbReference>
<dbReference type="Gramene" id="Zm00001eb164390_T002">
    <property type="protein sequence ID" value="Zm00001eb164390_P002"/>
    <property type="gene ID" value="Zm00001eb164390"/>
</dbReference>
<dbReference type="KEGG" id="zma:541712"/>
<dbReference type="MaizeGDB" id="114858"/>
<dbReference type="eggNOG" id="KOG0651">
    <property type="taxonomic scope" value="Eukaryota"/>
</dbReference>
<dbReference type="HOGENOM" id="CLU_038420_0_0_1"/>
<dbReference type="InParanoid" id="Q9ZT00"/>
<dbReference type="OMA" id="MVDSKFQ"/>
<dbReference type="OrthoDB" id="2014558at2759"/>
<dbReference type="Proteomes" id="UP000007305">
    <property type="component" value="Chromosome 4"/>
</dbReference>
<dbReference type="ExpressionAtlas" id="Q9ZT00">
    <property type="expression patterns" value="baseline and differential"/>
</dbReference>
<dbReference type="GO" id="GO:0009570">
    <property type="term" value="C:chloroplast stroma"/>
    <property type="evidence" value="ECO:0000318"/>
    <property type="project" value="GO_Central"/>
</dbReference>
<dbReference type="GO" id="GO:0005524">
    <property type="term" value="F:ATP binding"/>
    <property type="evidence" value="ECO:0007669"/>
    <property type="project" value="UniProtKB-KW"/>
</dbReference>
<dbReference type="GO" id="GO:0016887">
    <property type="term" value="F:ATP hydrolysis activity"/>
    <property type="evidence" value="ECO:0007669"/>
    <property type="project" value="InterPro"/>
</dbReference>
<dbReference type="GO" id="GO:0046863">
    <property type="term" value="F:ribulose-1,5-bisphosphate carboxylase/oxygenase activator activity"/>
    <property type="evidence" value="ECO:0000318"/>
    <property type="project" value="GO_Central"/>
</dbReference>
<dbReference type="FunFam" id="1.10.8.1070:FF:000001">
    <property type="entry name" value="Ribulose bisphosphate carboxylase/oxygenase activase, chloroplastic"/>
    <property type="match status" value="1"/>
</dbReference>
<dbReference type="FunFam" id="3.40.50.300:FF:000258">
    <property type="entry name" value="Ribulose bisphosphate carboxylase/oxygenase activase, chloroplastic"/>
    <property type="match status" value="1"/>
</dbReference>
<dbReference type="Gene3D" id="1.10.8.1070">
    <property type="match status" value="1"/>
</dbReference>
<dbReference type="Gene3D" id="3.40.50.300">
    <property type="entry name" value="P-loop containing nucleotide triphosphate hydrolases"/>
    <property type="match status" value="1"/>
</dbReference>
<dbReference type="InterPro" id="IPR003959">
    <property type="entry name" value="ATPase_AAA_core"/>
</dbReference>
<dbReference type="InterPro" id="IPR027417">
    <property type="entry name" value="P-loop_NTPase"/>
</dbReference>
<dbReference type="InterPro" id="IPR044960">
    <property type="entry name" value="RCA-like"/>
</dbReference>
<dbReference type="InterPro" id="IPR048571">
    <property type="entry name" value="RuBisCO_activase_AAA_helical"/>
</dbReference>
<dbReference type="PANTHER" id="PTHR32429">
    <property type="match status" value="1"/>
</dbReference>
<dbReference type="PANTHER" id="PTHR32429:SF44">
    <property type="entry name" value="RIBULOSE BISPHOSPHATE CARBOXYLASE_OXYGENASE ACTIVASE, CHLOROPLASTIC"/>
    <property type="match status" value="1"/>
</dbReference>
<dbReference type="Pfam" id="PF00004">
    <property type="entry name" value="AAA"/>
    <property type="match status" value="1"/>
</dbReference>
<dbReference type="Pfam" id="PF21228">
    <property type="entry name" value="RuBisCO_activase_AAA_helical"/>
    <property type="match status" value="1"/>
</dbReference>
<dbReference type="SUPFAM" id="SSF52540">
    <property type="entry name" value="P-loop containing nucleoside triphosphate hydrolases"/>
    <property type="match status" value="1"/>
</dbReference>
<feature type="transit peptide" description="Chloroplast" evidence="1">
    <location>
        <begin position="1"/>
        <end position="53"/>
    </location>
</feature>
<feature type="chain" id="PRO_0000030236" description="Ribulose bisphosphate carboxylase/oxygenase activase, chloroplastic">
    <location>
        <begin position="54"/>
        <end position="433"/>
    </location>
</feature>
<feature type="region of interest" description="Disordered" evidence="2">
    <location>
        <begin position="1"/>
        <end position="60"/>
    </location>
</feature>
<feature type="compositionally biased region" description="Polar residues" evidence="2">
    <location>
        <begin position="1"/>
        <end position="20"/>
    </location>
</feature>
<feature type="binding site" evidence="1">
    <location>
        <begin position="161"/>
        <end position="168"/>
    </location>
    <ligand>
        <name>ATP</name>
        <dbReference type="ChEBI" id="CHEBI:30616"/>
    </ligand>
</feature>
<sequence>MAAAFSSTVGAPASTPTRSSFLGKKLNKPQVSAAVTYHGKSSSSNSRFKAMAAKEVDETKQTDEDRWKGLAYDISDDQQDITRGKGLVDNLFQAPMGDGTHVAVLSSYDYISQGQKSYNFDNMMDGFYIAKGFMDKLVVHLSKNFMTLPNIKVPLILGIWGGKGQGKSFQCELVFAKMGITPIMMSAGELESGNAGEPAKLIRQRYREASDLIKKGKMSCLFINDLDAGAGRMGGTTQYTVNNQMVNATLMNIADNPTNVQLPGMYNKEDNPRVPIIVTGNDFSTLYAPLIRDGRMEKFYWAPTREDRIGVCKGIFRTDGVDEEHVVQLVDTFPGQSIDFFGALRARVYDDEVRRWVSETGVENIARKLVNSKEGPPTFEQPKITIEKLLEYGHMLVAEQENVKRVQLADKYLNEAALGEANEDAMKTGSFFK</sequence>
<comment type="function">
    <text>Activation of RuBisCO (ribulose-1,5-bisphosphate carboxylase/oxygenase; EC 4.1.1.39) involves the ATP-dependent carboxylation of the epsilon-amino group of lysine leading to a carbamate structure.</text>
</comment>
<comment type="subcellular location">
    <subcellularLocation>
        <location>Plastid</location>
        <location>Chloroplast stroma</location>
    </subcellularLocation>
</comment>
<comment type="similarity">
    <text evidence="3">Belongs to the RuBisCO activase family.</text>
</comment>
<protein>
    <recommendedName>
        <fullName>Ribulose bisphosphate carboxylase/oxygenase activase, chloroplastic</fullName>
        <shortName>RA</shortName>
        <shortName>RuBisCO activase</shortName>
    </recommendedName>
</protein>
<evidence type="ECO:0000255" key="1"/>
<evidence type="ECO:0000256" key="2">
    <source>
        <dbReference type="SAM" id="MobiDB-lite"/>
    </source>
</evidence>
<evidence type="ECO:0000305" key="3"/>
<reference key="1">
    <citation type="online journal article" date="1998" name="Plant Gene Register">
        <title>A cDNA from maize (Zea mays L) encoding ribulose-1,5-bisphosphate carboxylase/oxygenase activase.</title>
        <authorList>
            <person name="Ayala-Ochoa A."/>
            <person name="Loza-Tavera H."/>
            <person name="Sanchez de Jimenez E."/>
        </authorList>
        <locator>PGR98-207</locator>
    </citation>
    <scope>NUCLEOTIDE SEQUENCE [MRNA]</scope>
    <source>
        <strain>cv. Chalqueno</strain>
        <tissue>Leaf</tissue>
    </source>
</reference>
<reference key="2">
    <citation type="submission" date="2002-04" db="EMBL/GenBank/DDBJ databases">
        <authorList>
            <person name="Ayala-Ochoa A."/>
            <person name="Loza-Tavera H."/>
            <person name="Sanchez de Jimenez E."/>
        </authorList>
    </citation>
    <scope>SEQUENCE REVISION TO 57-68; 160; 219 AND 347</scope>
</reference>
<name>RCA_MAIZE</name>
<accession>Q9ZT00</accession>
<gene>
    <name type="primary">RCA1</name>
    <name type="synonym">RCA</name>
</gene>
<organism>
    <name type="scientific">Zea mays</name>
    <name type="common">Maize</name>
    <dbReference type="NCBI Taxonomy" id="4577"/>
    <lineage>
        <taxon>Eukaryota</taxon>
        <taxon>Viridiplantae</taxon>
        <taxon>Streptophyta</taxon>
        <taxon>Embryophyta</taxon>
        <taxon>Tracheophyta</taxon>
        <taxon>Spermatophyta</taxon>
        <taxon>Magnoliopsida</taxon>
        <taxon>Liliopsida</taxon>
        <taxon>Poales</taxon>
        <taxon>Poaceae</taxon>
        <taxon>PACMAD clade</taxon>
        <taxon>Panicoideae</taxon>
        <taxon>Andropogonodae</taxon>
        <taxon>Andropogoneae</taxon>
        <taxon>Tripsacinae</taxon>
        <taxon>Zea</taxon>
    </lineage>
</organism>
<keyword id="KW-0067">ATP-binding</keyword>
<keyword id="KW-0150">Chloroplast</keyword>
<keyword id="KW-0547">Nucleotide-binding</keyword>
<keyword id="KW-0934">Plastid</keyword>
<keyword id="KW-1185">Reference proteome</keyword>
<keyword id="KW-0809">Transit peptide</keyword>